<organism>
    <name type="scientific">Methanococcus maripaludis (strain C5 / ATCC BAA-1333)</name>
    <dbReference type="NCBI Taxonomy" id="402880"/>
    <lineage>
        <taxon>Archaea</taxon>
        <taxon>Methanobacteriati</taxon>
        <taxon>Methanobacteriota</taxon>
        <taxon>Methanomada group</taxon>
        <taxon>Methanococci</taxon>
        <taxon>Methanococcales</taxon>
        <taxon>Methanococcaceae</taxon>
        <taxon>Methanococcus</taxon>
    </lineage>
</organism>
<name>DNAG_METM5</name>
<sequence length="438" mass="49022">MDLGTTKYIIYTELIADGYVEKHDVIGAIFGQTEGLLSNELDLRDLQKSGRIGRIDVDLENINGKSFAKITLPSSLDKVETSILAATLETIDRVGPCFATVKITEVEDIRVSKRQYITNRARSILRKLMDEMIDTYEITEEIKESLRTEEIMEYGPENLPCGPNVVHSDSIIVVEGRADVLNLLRCGIKNTVAVEGTSVPKSIMELTKKKTTTAFTDGDRGGELILKELLQTCDIDYVARAPYGKEVEGTSKKEIMKCLRSKVPVEQIVGNTCNDACNVSKVIEDTPKEIFEPVTHKYYEKVETPVIEPVFEGPVVEEEIVVVEPVKKTETEIIDVDATNEIQADRKFSGVKEIVDSIKNTGNVKFVVDGTEKTNTFKEFLTNIHEIKKMDFFAADMPISQKIVDLLYDKTPIIVGKEINVTKKPVNLRLFSFDEIVA</sequence>
<dbReference type="EC" id="2.7.7.101" evidence="1"/>
<dbReference type="EMBL" id="CP000609">
    <property type="protein sequence ID" value="ABO34623.1"/>
    <property type="molecule type" value="Genomic_DNA"/>
</dbReference>
<dbReference type="RefSeq" id="WP_011868078.1">
    <property type="nucleotide sequence ID" value="NC_009135.1"/>
</dbReference>
<dbReference type="SMR" id="A4FWP8"/>
<dbReference type="STRING" id="402880.MmarC5_0307"/>
<dbReference type="GeneID" id="4928756"/>
<dbReference type="KEGG" id="mmq:MmarC5_0307"/>
<dbReference type="eggNOG" id="arCOG04281">
    <property type="taxonomic scope" value="Archaea"/>
</dbReference>
<dbReference type="HOGENOM" id="CLU_034626_0_0_2"/>
<dbReference type="OrthoDB" id="8643at2157"/>
<dbReference type="Proteomes" id="UP000000253">
    <property type="component" value="Chromosome"/>
</dbReference>
<dbReference type="GO" id="GO:0005737">
    <property type="term" value="C:cytoplasm"/>
    <property type="evidence" value="ECO:0007669"/>
    <property type="project" value="TreeGrafter"/>
</dbReference>
<dbReference type="GO" id="GO:0000428">
    <property type="term" value="C:DNA-directed RNA polymerase complex"/>
    <property type="evidence" value="ECO:0007669"/>
    <property type="project" value="UniProtKB-KW"/>
</dbReference>
<dbReference type="GO" id="GO:0000178">
    <property type="term" value="C:exosome (RNase complex)"/>
    <property type="evidence" value="ECO:0007669"/>
    <property type="project" value="InterPro"/>
</dbReference>
<dbReference type="GO" id="GO:1990077">
    <property type="term" value="C:primosome complex"/>
    <property type="evidence" value="ECO:0007669"/>
    <property type="project" value="UniProtKB-KW"/>
</dbReference>
<dbReference type="GO" id="GO:0003899">
    <property type="term" value="F:DNA-directed RNA polymerase activity"/>
    <property type="evidence" value="ECO:0007669"/>
    <property type="project" value="InterPro"/>
</dbReference>
<dbReference type="GO" id="GO:0046872">
    <property type="term" value="F:metal ion binding"/>
    <property type="evidence" value="ECO:0007669"/>
    <property type="project" value="UniProtKB-KW"/>
</dbReference>
<dbReference type="GO" id="GO:0008143">
    <property type="term" value="F:poly(A) binding"/>
    <property type="evidence" value="ECO:0007669"/>
    <property type="project" value="InterPro"/>
</dbReference>
<dbReference type="GO" id="GO:0006269">
    <property type="term" value="P:DNA replication, synthesis of primer"/>
    <property type="evidence" value="ECO:0007669"/>
    <property type="project" value="UniProtKB-UniRule"/>
</dbReference>
<dbReference type="CDD" id="cd01029">
    <property type="entry name" value="TOPRIM_primases"/>
    <property type="match status" value="1"/>
</dbReference>
<dbReference type="FunFam" id="3.40.1360.10:FF:000010">
    <property type="entry name" value="DNA primase DnaG"/>
    <property type="match status" value="1"/>
</dbReference>
<dbReference type="Gene3D" id="3.40.1360.10">
    <property type="match status" value="1"/>
</dbReference>
<dbReference type="HAMAP" id="MF_00007">
    <property type="entry name" value="DNA_primase_DnaG_arc"/>
    <property type="match status" value="1"/>
</dbReference>
<dbReference type="InterPro" id="IPR050219">
    <property type="entry name" value="DnaG_primase"/>
</dbReference>
<dbReference type="InterPro" id="IPR020607">
    <property type="entry name" value="Primase_DnaG_arc"/>
</dbReference>
<dbReference type="InterPro" id="IPR034154">
    <property type="entry name" value="TOPRIM_DnaG/twinkle"/>
</dbReference>
<dbReference type="InterPro" id="IPR006171">
    <property type="entry name" value="TOPRIM_dom"/>
</dbReference>
<dbReference type="NCBIfam" id="NF003108">
    <property type="entry name" value="PRK04031.1-1"/>
    <property type="match status" value="1"/>
</dbReference>
<dbReference type="PANTHER" id="PTHR30313">
    <property type="entry name" value="DNA PRIMASE"/>
    <property type="match status" value="1"/>
</dbReference>
<dbReference type="PANTHER" id="PTHR30313:SF2">
    <property type="entry name" value="DNA PRIMASE"/>
    <property type="match status" value="1"/>
</dbReference>
<dbReference type="Pfam" id="PF13662">
    <property type="entry name" value="Toprim_4"/>
    <property type="match status" value="1"/>
</dbReference>
<dbReference type="SMART" id="SM00493">
    <property type="entry name" value="TOPRIM"/>
    <property type="match status" value="1"/>
</dbReference>
<dbReference type="SUPFAM" id="SSF56731">
    <property type="entry name" value="DNA primase core"/>
    <property type="match status" value="1"/>
</dbReference>
<dbReference type="PROSITE" id="PS50880">
    <property type="entry name" value="TOPRIM"/>
    <property type="match status" value="1"/>
</dbReference>
<evidence type="ECO:0000255" key="1">
    <source>
        <dbReference type="HAMAP-Rule" id="MF_00007"/>
    </source>
</evidence>
<protein>
    <recommendedName>
        <fullName evidence="1">DNA primase DnaG</fullName>
        <ecNumber evidence="1">2.7.7.101</ecNumber>
    </recommendedName>
</protein>
<accession>A4FWP8</accession>
<keyword id="KW-0235">DNA replication</keyword>
<keyword id="KW-0240">DNA-directed RNA polymerase</keyword>
<keyword id="KW-0460">Magnesium</keyword>
<keyword id="KW-0479">Metal-binding</keyword>
<keyword id="KW-0548">Nucleotidyltransferase</keyword>
<keyword id="KW-0639">Primosome</keyword>
<keyword id="KW-0804">Transcription</keyword>
<keyword id="KW-0808">Transferase</keyword>
<proteinExistence type="inferred from homology"/>
<gene>
    <name evidence="1" type="primary">dnaG</name>
    <name type="ordered locus">MmarC5_0307</name>
</gene>
<reference key="1">
    <citation type="submission" date="2007-03" db="EMBL/GenBank/DDBJ databases">
        <title>Complete sequence of chromosome of Methanococcus maripaludis C5.</title>
        <authorList>
            <consortium name="US DOE Joint Genome Institute"/>
            <person name="Copeland A."/>
            <person name="Lucas S."/>
            <person name="Lapidus A."/>
            <person name="Barry K."/>
            <person name="Glavina del Rio T."/>
            <person name="Dalin E."/>
            <person name="Tice H."/>
            <person name="Pitluck S."/>
            <person name="Chertkov O."/>
            <person name="Brettin T."/>
            <person name="Bruce D."/>
            <person name="Han C."/>
            <person name="Detter J.C."/>
            <person name="Schmutz J."/>
            <person name="Larimer F."/>
            <person name="Land M."/>
            <person name="Hauser L."/>
            <person name="Kyrpides N."/>
            <person name="Mikhailova N."/>
            <person name="Sieprawska-Lupa M."/>
            <person name="Whitman W.B."/>
            <person name="Richardson P."/>
        </authorList>
    </citation>
    <scope>NUCLEOTIDE SEQUENCE [LARGE SCALE GENOMIC DNA]</scope>
    <source>
        <strain>C5 / ATCC BAA-1333</strain>
    </source>
</reference>
<feature type="chain" id="PRO_1000000559" description="DNA primase DnaG">
    <location>
        <begin position="1"/>
        <end position="438"/>
    </location>
</feature>
<feature type="domain" description="Toprim" evidence="1">
    <location>
        <begin position="169"/>
        <end position="243"/>
    </location>
</feature>
<feature type="binding site" evidence="1">
    <location>
        <position position="175"/>
    </location>
    <ligand>
        <name>Mg(2+)</name>
        <dbReference type="ChEBI" id="CHEBI:18420"/>
        <label>1</label>
        <note>catalytic</note>
    </ligand>
</feature>
<feature type="binding site" evidence="1">
    <location>
        <position position="217"/>
    </location>
    <ligand>
        <name>Mg(2+)</name>
        <dbReference type="ChEBI" id="CHEBI:18420"/>
        <label>1</label>
        <note>catalytic</note>
    </ligand>
</feature>
<feature type="binding site" evidence="1">
    <location>
        <position position="217"/>
    </location>
    <ligand>
        <name>Mg(2+)</name>
        <dbReference type="ChEBI" id="CHEBI:18420"/>
        <label>2</label>
    </ligand>
</feature>
<feature type="binding site" evidence="1">
    <location>
        <position position="219"/>
    </location>
    <ligand>
        <name>Mg(2+)</name>
        <dbReference type="ChEBI" id="CHEBI:18420"/>
        <label>2</label>
    </ligand>
</feature>
<comment type="function">
    <text evidence="1">RNA polymerase that catalyzes the synthesis of short RNA molecules used as primers for DNA polymerase during DNA replication.</text>
</comment>
<comment type="catalytic activity">
    <reaction evidence="1">
        <text>ssDNA + n NTP = ssDNA/pppN(pN)n-1 hybrid + (n-1) diphosphate.</text>
        <dbReference type="EC" id="2.7.7.101"/>
    </reaction>
</comment>
<comment type="cofactor">
    <cofactor evidence="1">
        <name>Mg(2+)</name>
        <dbReference type="ChEBI" id="CHEBI:18420"/>
    </cofactor>
    <text evidence="1">Binds two Mg(2+) per subunit.</text>
</comment>
<comment type="subunit">
    <text evidence="1">Forms a ternary complex with MCM helicase and DNA.</text>
</comment>
<comment type="similarity">
    <text evidence="1">Belongs to the archaeal DnaG primase family.</text>
</comment>